<feature type="chain" id="PRO_0000361124" description="Putative S-adenosyl-L-methionine-dependent methyltransferase MAB_4584c">
    <location>
        <begin position="1"/>
        <end position="308"/>
    </location>
</feature>
<feature type="binding site" evidence="1">
    <location>
        <position position="131"/>
    </location>
    <ligand>
        <name>S-adenosyl-L-methionine</name>
        <dbReference type="ChEBI" id="CHEBI:59789"/>
    </ligand>
</feature>
<feature type="binding site" evidence="1">
    <location>
        <begin position="160"/>
        <end position="161"/>
    </location>
    <ligand>
        <name>S-adenosyl-L-methionine</name>
        <dbReference type="ChEBI" id="CHEBI:59789"/>
    </ligand>
</feature>
<gene>
    <name type="ordered locus">MAB_4584c</name>
</gene>
<comment type="function">
    <text evidence="1">Exhibits S-adenosyl-L-methionine-dependent methyltransferase activity.</text>
</comment>
<comment type="similarity">
    <text evidence="2">Belongs to the UPF0677 family.</text>
</comment>
<accession>B1ML08</accession>
<name>Y4584_MYCA9</name>
<dbReference type="EC" id="2.1.1.-"/>
<dbReference type="EMBL" id="CU458896">
    <property type="protein sequence ID" value="CAM64653.1"/>
    <property type="molecule type" value="Genomic_DNA"/>
</dbReference>
<dbReference type="RefSeq" id="WP_005079766.1">
    <property type="nucleotide sequence ID" value="NZ_MLCG01000001.1"/>
</dbReference>
<dbReference type="SMR" id="B1ML08"/>
<dbReference type="GeneID" id="93381528"/>
<dbReference type="KEGG" id="mab:MAB_4584c"/>
<dbReference type="Proteomes" id="UP000007137">
    <property type="component" value="Chromosome"/>
</dbReference>
<dbReference type="GO" id="GO:0008168">
    <property type="term" value="F:methyltransferase activity"/>
    <property type="evidence" value="ECO:0007669"/>
    <property type="project" value="UniProtKB-KW"/>
</dbReference>
<dbReference type="GO" id="GO:0032259">
    <property type="term" value="P:methylation"/>
    <property type="evidence" value="ECO:0007669"/>
    <property type="project" value="UniProtKB-KW"/>
</dbReference>
<dbReference type="Gene3D" id="3.40.50.150">
    <property type="entry name" value="Vaccinia Virus protein VP39"/>
    <property type="match status" value="1"/>
</dbReference>
<dbReference type="InterPro" id="IPR007213">
    <property type="entry name" value="Ppm1/Ppm2/Tcmp"/>
</dbReference>
<dbReference type="InterPro" id="IPR029063">
    <property type="entry name" value="SAM-dependent_MTases_sf"/>
</dbReference>
<dbReference type="InterPro" id="IPR011610">
    <property type="entry name" value="SAM_mthyl_Trfase_ML2640-like"/>
</dbReference>
<dbReference type="NCBIfam" id="TIGR00027">
    <property type="entry name" value="mthyl_TIGR00027"/>
    <property type="match status" value="1"/>
</dbReference>
<dbReference type="PANTHER" id="PTHR43619">
    <property type="entry name" value="S-ADENOSYL-L-METHIONINE-DEPENDENT METHYLTRANSFERASE YKTD-RELATED"/>
    <property type="match status" value="1"/>
</dbReference>
<dbReference type="PANTHER" id="PTHR43619:SF2">
    <property type="entry name" value="S-ADENOSYL-L-METHIONINE-DEPENDENT METHYLTRANSFERASES SUPERFAMILY PROTEIN"/>
    <property type="match status" value="1"/>
</dbReference>
<dbReference type="Pfam" id="PF04072">
    <property type="entry name" value="LCM"/>
    <property type="match status" value="1"/>
</dbReference>
<dbReference type="SUPFAM" id="SSF53335">
    <property type="entry name" value="S-adenosyl-L-methionine-dependent methyltransferases"/>
    <property type="match status" value="1"/>
</dbReference>
<protein>
    <recommendedName>
        <fullName>Putative S-adenosyl-L-methionine-dependent methyltransferase MAB_4584c</fullName>
        <ecNumber>2.1.1.-</ecNumber>
    </recommendedName>
</protein>
<keyword id="KW-0489">Methyltransferase</keyword>
<keyword id="KW-1185">Reference proteome</keyword>
<keyword id="KW-0949">S-adenosyl-L-methionine</keyword>
<keyword id="KW-0808">Transferase</keyword>
<organism>
    <name type="scientific">Mycobacteroides abscessus (strain ATCC 19977 / DSM 44196 / CCUG 20993 / CIP 104536 / JCM 13569 / NCTC 13031 / TMC 1543 / L948)</name>
    <name type="common">Mycobacterium abscessus</name>
    <dbReference type="NCBI Taxonomy" id="561007"/>
    <lineage>
        <taxon>Bacteria</taxon>
        <taxon>Bacillati</taxon>
        <taxon>Actinomycetota</taxon>
        <taxon>Actinomycetes</taxon>
        <taxon>Mycobacteriales</taxon>
        <taxon>Mycobacteriaceae</taxon>
        <taxon>Mycobacteroides</taxon>
        <taxon>Mycobacteroides abscessus</taxon>
    </lineage>
</organism>
<reference key="1">
    <citation type="journal article" date="2009" name="PLoS ONE">
        <title>Non mycobacterial virulence genes in the genome of the emerging pathogen Mycobacterium abscessus.</title>
        <authorList>
            <person name="Ripoll F."/>
            <person name="Pasek S."/>
            <person name="Schenowitz C."/>
            <person name="Dossat C."/>
            <person name="Barbe V."/>
            <person name="Rottman M."/>
            <person name="Macheras E."/>
            <person name="Heym B."/>
            <person name="Herrmann J.L."/>
            <person name="Daffe M."/>
            <person name="Brosch R."/>
            <person name="Risler J.L."/>
            <person name="Gaillard J.L."/>
        </authorList>
    </citation>
    <scope>NUCLEOTIDE SEQUENCE [LARGE SCALE GENOMIC DNA]</scope>
    <source>
        <strain>ATCC 19977 / DSM 44196 / CCUG 20993 / CIP 104536 / JCM 13569 / NCTC 13031 / TMC 1543 / L948</strain>
    </source>
</reference>
<proteinExistence type="inferred from homology"/>
<evidence type="ECO:0000250" key="1"/>
<evidence type="ECO:0000305" key="2"/>
<sequence length="308" mass="33674">MTNIEDKDWSRSEGDSWDIVSSVGFTALGVAAARAVENREADPLVRDPYAEHFVRAAGEPHLIGLLDSSEPKPPNPGTAPRHIGLRSKFFDEFFINATNSGCKQAVILAAGLDVRAHRLPWPAGTKVFELDQPQVLEFKDRVLAEHDATPTSDRREIAVDLRDDWPAALLAAGFDPEVPTAWSAEGLIIYLPSAAQDLLFERVVALSAPGSQVAVEATRGRPDIAKWGEMQKKYADEGHPMSKVDITTLFYDEERADVAEWLAARGWKVQGSHALELAAAYGVEIPELPEDVVEVVKQGNYVTAVLPS</sequence>